<reference key="1">
    <citation type="journal article" date="2008" name="PLoS Genet.">
        <title>Genomic islands in the pathogenic filamentous fungus Aspergillus fumigatus.</title>
        <authorList>
            <person name="Fedorova N.D."/>
            <person name="Khaldi N."/>
            <person name="Joardar V.S."/>
            <person name="Maiti R."/>
            <person name="Amedeo P."/>
            <person name="Anderson M.J."/>
            <person name="Crabtree J."/>
            <person name="Silva J.C."/>
            <person name="Badger J.H."/>
            <person name="Albarraq A."/>
            <person name="Angiuoli S."/>
            <person name="Bussey H."/>
            <person name="Bowyer P."/>
            <person name="Cotty P.J."/>
            <person name="Dyer P.S."/>
            <person name="Egan A."/>
            <person name="Galens K."/>
            <person name="Fraser-Liggett C.M."/>
            <person name="Haas B.J."/>
            <person name="Inman J.M."/>
            <person name="Kent R."/>
            <person name="Lemieux S."/>
            <person name="Malavazi I."/>
            <person name="Orvis J."/>
            <person name="Roemer T."/>
            <person name="Ronning C.M."/>
            <person name="Sundaram J.P."/>
            <person name="Sutton G."/>
            <person name="Turner G."/>
            <person name="Venter J.C."/>
            <person name="White O.R."/>
            <person name="Whitty B.R."/>
            <person name="Youngman P."/>
            <person name="Wolfe K.H."/>
            <person name="Goldman G.H."/>
            <person name="Wortman J.R."/>
            <person name="Jiang B."/>
            <person name="Denning D.W."/>
            <person name="Nierman W.C."/>
        </authorList>
    </citation>
    <scope>NUCLEOTIDE SEQUENCE [LARGE SCALE GENOMIC DNA]</scope>
    <source>
        <strain>CBS 144.89 / FGSC A1163 / CEA10</strain>
    </source>
</reference>
<reference key="2">
    <citation type="journal article" date="2007" name="PLoS Pathog.">
        <title>Transcriptional regulation of chemical diversity in Aspergillus fumigatus by LaeA.</title>
        <authorList>
            <person name="Perrin R.M."/>
            <person name="Fedorova N.D."/>
            <person name="Bok J.W."/>
            <person name="Cramer R.A."/>
            <person name="Wortman J.R."/>
            <person name="Kim H.S."/>
            <person name="Nierman W.C."/>
            <person name="Keller N.P."/>
        </authorList>
    </citation>
    <scope>INDUCTION</scope>
</reference>
<reference key="3">
    <citation type="journal article" date="2008" name="PLoS ONE">
        <title>Genes differentially expressed in conidia and hyphae of Aspergillus fumigatus upon exposure to human neutrophils.</title>
        <authorList>
            <person name="Sugui J.A."/>
            <person name="Kim H.S."/>
            <person name="Zarember K.A."/>
            <person name="Chang Y.C."/>
            <person name="Gallin J.I."/>
            <person name="Nierman W.C."/>
            <person name="Kwon-Chung K.J."/>
        </authorList>
    </citation>
    <scope>INDUCTION</scope>
</reference>
<reference key="4">
    <citation type="journal article" date="2013" name="J. Am. Chem. Soc.">
        <title>A nonribosomal peptide synthetase-derived iron(III) complex from the pathogenic fungus Aspergillus fumigatus.</title>
        <authorList>
            <person name="Yin W.B."/>
            <person name="Baccile J.A."/>
            <person name="Bok J.W."/>
            <person name="Chen Y."/>
            <person name="Keller N.P."/>
            <person name="Schroeder F.C."/>
        </authorList>
    </citation>
    <scope>FUNCTION</scope>
</reference>
<reference key="5">
    <citation type="journal article" date="2022" name="J. Fungi">
        <title>Stress responses elicited by glucose withdrawal in Aspergillus fumigatus.</title>
        <authorList>
            <person name="Emri T."/>
            <person name="Antal K."/>
            <person name="Gila B."/>
            <person name="Jonas A.P."/>
            <person name="Pocsi I."/>
        </authorList>
    </citation>
    <scope>INDUCTION</scope>
</reference>
<organism>
    <name type="scientific">Aspergillus fumigatus (strain CBS 144.89 / FGSC A1163 / CEA10)</name>
    <name type="common">Neosartorya fumigata</name>
    <dbReference type="NCBI Taxonomy" id="451804"/>
    <lineage>
        <taxon>Eukaryota</taxon>
        <taxon>Fungi</taxon>
        <taxon>Dikarya</taxon>
        <taxon>Ascomycota</taxon>
        <taxon>Pezizomycotina</taxon>
        <taxon>Eurotiomycetes</taxon>
        <taxon>Eurotiomycetidae</taxon>
        <taxon>Eurotiales</taxon>
        <taxon>Aspergillaceae</taxon>
        <taxon>Aspergillus</taxon>
        <taxon>Aspergillus subgen. Fumigati</taxon>
    </lineage>
</organism>
<comment type="function">
    <text evidence="5">Transcription factor; part of the gene cluster that mediates the biosynthesis of hexadehydro-astechrome (HAS), a tryptophan-derived iron(III)-complex that acts as a virulence factor in infected mice (PubMed:23360537). Positively regulates the expression of the HAS biosynthetic genes (PubMed:23360537).</text>
</comment>
<comment type="subcellular location">
    <subcellularLocation>
        <location evidence="1">Nucleus</location>
    </subcellularLocation>
</comment>
<comment type="induction">
    <text evidence="3 4 6">The expression of the hexadehydro-astechrome cluster is induced by glucose (PubMed:36422047). Expression is positively regulated by the global regulator for secondary metabolite gene expression laeA and is strongly induced in conidia during neutrophil exposure (PubMed:17432932, PubMed:18648542).</text>
</comment>
<name>HASA_ASPFC</name>
<feature type="chain" id="PRO_0000461224" description="C6 finger domain transcription factor hasA">
    <location>
        <begin position="1"/>
        <end position="411"/>
    </location>
</feature>
<feature type="DNA-binding region" description="Zn(2)-C6 fungal-type" evidence="1">
    <location>
        <begin position="28"/>
        <end position="54"/>
    </location>
</feature>
<feature type="region of interest" description="Disordered" evidence="2">
    <location>
        <begin position="1"/>
        <end position="21"/>
    </location>
</feature>
<feature type="compositionally biased region" description="Polar residues" evidence="2">
    <location>
        <begin position="1"/>
        <end position="17"/>
    </location>
</feature>
<sequence length="411" mass="45116">MTSTLPYLTSPPATHPSNSDHKKLRSACDSCHQCKVKCSGGSPCFRCTSKGLNCRYGYQNRAGKPKGSKNRKTLEREHQLRMEWLTSQLRDANGGLGNLNIDLSDPTTLLPSPFFQSTRWKQGHMLPQSSVQPTPANQCIKSTEHESECLPTPQGLDTWTMDLGPIAQTPRESTSESLEAFTTPISFTGGGETYLRQLSDPTTPISFGFPSPHARLDGTGDPCACVQTQAVNISTLHQLTCRDRSDRFDLAMKSITSTLETCEKFVVCEACDKSVASILLTLSAIELIFTLFEQLTMNNRRLSPPEEEQRLIPCSLGDYKVTKEESQAIRNVLVKMTLSKGKQALNALQNLVNGSVDFLDESGPCEASQHDSNNANEPMLSGLSVTDRNYMTQCISRKNAALEVLMAAVAV</sequence>
<gene>
    <name evidence="7" type="primary">hasA</name>
    <name type="ORF">AFUB_036300</name>
</gene>
<protein>
    <recommendedName>
        <fullName evidence="7">C6 finger domain transcription factor hasA</fullName>
    </recommendedName>
    <alternativeName>
        <fullName evidence="7">Hexadehydro-astechrome biosynthesis cluster protein A</fullName>
    </alternativeName>
</protein>
<dbReference type="EMBL" id="DS499596">
    <property type="protein sequence ID" value="EDP52464.1"/>
    <property type="molecule type" value="Genomic_DNA"/>
</dbReference>
<dbReference type="EnsemblFungi" id="EDP52464">
    <property type="protein sequence ID" value="EDP52464"/>
    <property type="gene ID" value="AFUB_036300"/>
</dbReference>
<dbReference type="VEuPathDB" id="FungiDB:AFUB_036300"/>
<dbReference type="HOGENOM" id="CLU_052542_1_0_1"/>
<dbReference type="OrthoDB" id="93807at5052"/>
<dbReference type="PhylomeDB" id="B0XWT0"/>
<dbReference type="Proteomes" id="UP000001699">
    <property type="component" value="Unassembled WGS sequence"/>
</dbReference>
<dbReference type="GO" id="GO:0005634">
    <property type="term" value="C:nucleus"/>
    <property type="evidence" value="ECO:0007669"/>
    <property type="project" value="UniProtKB-SubCell"/>
</dbReference>
<dbReference type="GO" id="GO:0000981">
    <property type="term" value="F:DNA-binding transcription factor activity, RNA polymerase II-specific"/>
    <property type="evidence" value="ECO:0007669"/>
    <property type="project" value="InterPro"/>
</dbReference>
<dbReference type="GO" id="GO:0043565">
    <property type="term" value="F:sequence-specific DNA binding"/>
    <property type="evidence" value="ECO:0007669"/>
    <property type="project" value="TreeGrafter"/>
</dbReference>
<dbReference type="GO" id="GO:0008270">
    <property type="term" value="F:zinc ion binding"/>
    <property type="evidence" value="ECO:0007669"/>
    <property type="project" value="InterPro"/>
</dbReference>
<dbReference type="GO" id="GO:0045944">
    <property type="term" value="P:positive regulation of transcription by RNA polymerase II"/>
    <property type="evidence" value="ECO:0007669"/>
    <property type="project" value="TreeGrafter"/>
</dbReference>
<dbReference type="CDD" id="cd00067">
    <property type="entry name" value="GAL4"/>
    <property type="match status" value="1"/>
</dbReference>
<dbReference type="FunFam" id="4.10.240.10:FF:000054">
    <property type="entry name" value="C6 transcription factor GliZ-like, putative"/>
    <property type="match status" value="1"/>
</dbReference>
<dbReference type="Gene3D" id="4.10.240.10">
    <property type="entry name" value="Zn(2)-C6 fungal-type DNA-binding domain"/>
    <property type="match status" value="1"/>
</dbReference>
<dbReference type="InterPro" id="IPR051711">
    <property type="entry name" value="Stress_Response_Reg"/>
</dbReference>
<dbReference type="InterPro" id="IPR036864">
    <property type="entry name" value="Zn2-C6_fun-type_DNA-bd_sf"/>
</dbReference>
<dbReference type="InterPro" id="IPR001138">
    <property type="entry name" value="Zn2Cys6_DnaBD"/>
</dbReference>
<dbReference type="PANTHER" id="PTHR47540">
    <property type="entry name" value="THIAMINE REPRESSIBLE GENES REGULATORY PROTEIN THI5"/>
    <property type="match status" value="1"/>
</dbReference>
<dbReference type="PANTHER" id="PTHR47540:SF4">
    <property type="entry name" value="TRANSCRIPTION FACTOR RGLT"/>
    <property type="match status" value="1"/>
</dbReference>
<dbReference type="Pfam" id="PF00172">
    <property type="entry name" value="Zn_clus"/>
    <property type="match status" value="1"/>
</dbReference>
<dbReference type="SMART" id="SM00066">
    <property type="entry name" value="GAL4"/>
    <property type="match status" value="1"/>
</dbReference>
<dbReference type="SUPFAM" id="SSF57701">
    <property type="entry name" value="Zn2/Cys6 DNA-binding domain"/>
    <property type="match status" value="1"/>
</dbReference>
<dbReference type="PROSITE" id="PS00463">
    <property type="entry name" value="ZN2_CY6_FUNGAL_1"/>
    <property type="match status" value="1"/>
</dbReference>
<dbReference type="PROSITE" id="PS50048">
    <property type="entry name" value="ZN2_CY6_FUNGAL_2"/>
    <property type="match status" value="1"/>
</dbReference>
<keyword id="KW-0238">DNA-binding</keyword>
<keyword id="KW-0479">Metal-binding</keyword>
<keyword id="KW-0539">Nucleus</keyword>
<keyword id="KW-0804">Transcription</keyword>
<keyword id="KW-0805">Transcription regulation</keyword>
<keyword id="KW-0843">Virulence</keyword>
<proteinExistence type="evidence at transcript level"/>
<evidence type="ECO:0000255" key="1">
    <source>
        <dbReference type="PROSITE-ProRule" id="PRU00227"/>
    </source>
</evidence>
<evidence type="ECO:0000256" key="2">
    <source>
        <dbReference type="SAM" id="MobiDB-lite"/>
    </source>
</evidence>
<evidence type="ECO:0000269" key="3">
    <source>
    </source>
</evidence>
<evidence type="ECO:0000269" key="4">
    <source>
    </source>
</evidence>
<evidence type="ECO:0000269" key="5">
    <source>
    </source>
</evidence>
<evidence type="ECO:0000269" key="6">
    <source>
    </source>
</evidence>
<evidence type="ECO:0000303" key="7">
    <source>
    </source>
</evidence>
<accession>B0XWT0</accession>